<dbReference type="EMBL" id="CP000647">
    <property type="protein sequence ID" value="ABR78511.1"/>
    <property type="molecule type" value="Genomic_DNA"/>
</dbReference>
<dbReference type="RefSeq" id="WP_002915156.1">
    <property type="nucleotide sequence ID" value="NC_009648.1"/>
</dbReference>
<dbReference type="SMR" id="A6TD40"/>
<dbReference type="STRING" id="272620.KPN_03110"/>
<dbReference type="jPOST" id="A6TD40"/>
<dbReference type="PaxDb" id="272620-KPN_03110"/>
<dbReference type="EnsemblBacteria" id="ABR78511">
    <property type="protein sequence ID" value="ABR78511"/>
    <property type="gene ID" value="KPN_03110"/>
</dbReference>
<dbReference type="GeneID" id="93271594"/>
<dbReference type="KEGG" id="kpn:KPN_03110"/>
<dbReference type="HOGENOM" id="CLU_134863_5_2_6"/>
<dbReference type="Proteomes" id="UP000000265">
    <property type="component" value="Chromosome"/>
</dbReference>
<dbReference type="GO" id="GO:0032153">
    <property type="term" value="C:cell division site"/>
    <property type="evidence" value="ECO:0007669"/>
    <property type="project" value="UniProtKB-UniRule"/>
</dbReference>
<dbReference type="GO" id="GO:0030428">
    <property type="term" value="C:cell septum"/>
    <property type="evidence" value="ECO:0007669"/>
    <property type="project" value="TreeGrafter"/>
</dbReference>
<dbReference type="GO" id="GO:0005886">
    <property type="term" value="C:plasma membrane"/>
    <property type="evidence" value="ECO:0007669"/>
    <property type="project" value="UniProtKB-SubCell"/>
</dbReference>
<dbReference type="GO" id="GO:0043093">
    <property type="term" value="P:FtsZ-dependent cytokinesis"/>
    <property type="evidence" value="ECO:0007669"/>
    <property type="project" value="UniProtKB-UniRule"/>
</dbReference>
<dbReference type="FunFam" id="1.20.5.400:FF:000001">
    <property type="entry name" value="Cell division protein FtsB"/>
    <property type="match status" value="1"/>
</dbReference>
<dbReference type="Gene3D" id="1.20.5.400">
    <property type="match status" value="1"/>
</dbReference>
<dbReference type="HAMAP" id="MF_00599">
    <property type="entry name" value="FtsB"/>
    <property type="match status" value="1"/>
</dbReference>
<dbReference type="InterPro" id="IPR023081">
    <property type="entry name" value="Cell_div_FtsB"/>
</dbReference>
<dbReference type="InterPro" id="IPR007060">
    <property type="entry name" value="FtsL/DivIC"/>
</dbReference>
<dbReference type="NCBIfam" id="NF002058">
    <property type="entry name" value="PRK00888.1"/>
    <property type="match status" value="1"/>
</dbReference>
<dbReference type="PANTHER" id="PTHR37485">
    <property type="entry name" value="CELL DIVISION PROTEIN FTSB"/>
    <property type="match status" value="1"/>
</dbReference>
<dbReference type="PANTHER" id="PTHR37485:SF1">
    <property type="entry name" value="CELL DIVISION PROTEIN FTSB"/>
    <property type="match status" value="1"/>
</dbReference>
<dbReference type="Pfam" id="PF04977">
    <property type="entry name" value="DivIC"/>
    <property type="match status" value="1"/>
</dbReference>
<organism>
    <name type="scientific">Klebsiella pneumoniae subsp. pneumoniae (strain ATCC 700721 / MGH 78578)</name>
    <dbReference type="NCBI Taxonomy" id="272620"/>
    <lineage>
        <taxon>Bacteria</taxon>
        <taxon>Pseudomonadati</taxon>
        <taxon>Pseudomonadota</taxon>
        <taxon>Gammaproteobacteria</taxon>
        <taxon>Enterobacterales</taxon>
        <taxon>Enterobacteriaceae</taxon>
        <taxon>Klebsiella/Raoultella group</taxon>
        <taxon>Klebsiella</taxon>
        <taxon>Klebsiella pneumoniae complex</taxon>
    </lineage>
</organism>
<name>FTSB_KLEP7</name>
<reference key="1">
    <citation type="submission" date="2006-09" db="EMBL/GenBank/DDBJ databases">
        <authorList>
            <consortium name="The Klebsiella pneumonia Genome Sequencing Project"/>
            <person name="McClelland M."/>
            <person name="Sanderson E.K."/>
            <person name="Spieth J."/>
            <person name="Clifton W.S."/>
            <person name="Latreille P."/>
            <person name="Sabo A."/>
            <person name="Pepin K."/>
            <person name="Bhonagiri V."/>
            <person name="Porwollik S."/>
            <person name="Ali J."/>
            <person name="Wilson R.K."/>
        </authorList>
    </citation>
    <scope>NUCLEOTIDE SEQUENCE [LARGE SCALE GENOMIC DNA]</scope>
    <source>
        <strain>ATCC 700721 / MGH 78578</strain>
    </source>
</reference>
<feature type="chain" id="PRO_1000025707" description="Cell division protein FtsB">
    <location>
        <begin position="1"/>
        <end position="105"/>
    </location>
</feature>
<feature type="topological domain" description="Cytoplasmic" evidence="1">
    <location>
        <begin position="1"/>
        <end position="3"/>
    </location>
</feature>
<feature type="transmembrane region" description="Helical" evidence="1">
    <location>
        <begin position="4"/>
        <end position="21"/>
    </location>
</feature>
<feature type="topological domain" description="Periplasmic" evidence="1">
    <location>
        <begin position="22"/>
        <end position="105"/>
    </location>
</feature>
<feature type="coiled-coil region" evidence="1">
    <location>
        <begin position="33"/>
        <end position="62"/>
    </location>
</feature>
<sequence>MGKLTLLLLALLVWLQYSLWFGKNGLHDYTRVNDDVTAQQATNAKLKARNDQLFAEIDDLNGGQEAIEERARNELSMTRPGETFYRLVPDASKRNQASGQQQNNR</sequence>
<accession>A6TD40</accession>
<comment type="function">
    <text evidence="1">Essential cell division protein. May link together the upstream cell division proteins, which are predominantly cytoplasmic, with the downstream cell division proteins, which are predominantly periplasmic.</text>
</comment>
<comment type="subunit">
    <text evidence="1">Part of a complex composed of FtsB, FtsL and FtsQ.</text>
</comment>
<comment type="subcellular location">
    <subcellularLocation>
        <location evidence="1">Cell inner membrane</location>
        <topology evidence="1">Single-pass type II membrane protein</topology>
    </subcellularLocation>
    <text evidence="1">Localizes to the division septum.</text>
</comment>
<comment type="similarity">
    <text evidence="1">Belongs to the FtsB family.</text>
</comment>
<protein>
    <recommendedName>
        <fullName evidence="1">Cell division protein FtsB</fullName>
    </recommendedName>
</protein>
<proteinExistence type="inferred from homology"/>
<gene>
    <name evidence="1" type="primary">ftsB</name>
    <name type="ordered locus">KPN78578_30500</name>
    <name type="ORF">KPN_03110</name>
</gene>
<keyword id="KW-0131">Cell cycle</keyword>
<keyword id="KW-0132">Cell division</keyword>
<keyword id="KW-0997">Cell inner membrane</keyword>
<keyword id="KW-1003">Cell membrane</keyword>
<keyword id="KW-0175">Coiled coil</keyword>
<keyword id="KW-0472">Membrane</keyword>
<keyword id="KW-0812">Transmembrane</keyword>
<keyword id="KW-1133">Transmembrane helix</keyword>
<evidence type="ECO:0000255" key="1">
    <source>
        <dbReference type="HAMAP-Rule" id="MF_00599"/>
    </source>
</evidence>